<accession>O96860</accession>
<accession>A4UZY5</accession>
<accession>C6SUZ4</accession>
<accession>Q541G4</accession>
<reference key="1">
    <citation type="submission" date="1996-02" db="EMBL/GenBank/DDBJ databases">
        <authorList>
            <person name="Li M.-G."/>
            <person name="Serr M."/>
            <person name="Hays T.S."/>
        </authorList>
    </citation>
    <scope>NUCLEOTIDE SEQUENCE [MRNA]</scope>
    <source>
        <tissue>Testis</tissue>
    </source>
</reference>
<reference key="2">
    <citation type="journal article" date="2000" name="Science">
        <title>The genome sequence of Drosophila melanogaster.</title>
        <authorList>
            <person name="Adams M.D."/>
            <person name="Celniker S.E."/>
            <person name="Holt R.A."/>
            <person name="Evans C.A."/>
            <person name="Gocayne J.D."/>
            <person name="Amanatides P.G."/>
            <person name="Scherer S.E."/>
            <person name="Li P.W."/>
            <person name="Hoskins R.A."/>
            <person name="Galle R.F."/>
            <person name="George R.A."/>
            <person name="Lewis S.E."/>
            <person name="Richards S."/>
            <person name="Ashburner M."/>
            <person name="Henderson S.N."/>
            <person name="Sutton G.G."/>
            <person name="Wortman J.R."/>
            <person name="Yandell M.D."/>
            <person name="Zhang Q."/>
            <person name="Chen L.X."/>
            <person name="Brandon R.C."/>
            <person name="Rogers Y.-H.C."/>
            <person name="Blazej R.G."/>
            <person name="Champe M."/>
            <person name="Pfeiffer B.D."/>
            <person name="Wan K.H."/>
            <person name="Doyle C."/>
            <person name="Baxter E.G."/>
            <person name="Helt G."/>
            <person name="Nelson C.R."/>
            <person name="Miklos G.L.G."/>
            <person name="Abril J.F."/>
            <person name="Agbayani A."/>
            <person name="An H.-J."/>
            <person name="Andrews-Pfannkoch C."/>
            <person name="Baldwin D."/>
            <person name="Ballew R.M."/>
            <person name="Basu A."/>
            <person name="Baxendale J."/>
            <person name="Bayraktaroglu L."/>
            <person name="Beasley E.M."/>
            <person name="Beeson K.Y."/>
            <person name="Benos P.V."/>
            <person name="Berman B.P."/>
            <person name="Bhandari D."/>
            <person name="Bolshakov S."/>
            <person name="Borkova D."/>
            <person name="Botchan M.R."/>
            <person name="Bouck J."/>
            <person name="Brokstein P."/>
            <person name="Brottier P."/>
            <person name="Burtis K.C."/>
            <person name="Busam D.A."/>
            <person name="Butler H."/>
            <person name="Cadieu E."/>
            <person name="Center A."/>
            <person name="Chandra I."/>
            <person name="Cherry J.M."/>
            <person name="Cawley S."/>
            <person name="Dahlke C."/>
            <person name="Davenport L.B."/>
            <person name="Davies P."/>
            <person name="de Pablos B."/>
            <person name="Delcher A."/>
            <person name="Deng Z."/>
            <person name="Mays A.D."/>
            <person name="Dew I."/>
            <person name="Dietz S.M."/>
            <person name="Dodson K."/>
            <person name="Doup L.E."/>
            <person name="Downes M."/>
            <person name="Dugan-Rocha S."/>
            <person name="Dunkov B.C."/>
            <person name="Dunn P."/>
            <person name="Durbin K.J."/>
            <person name="Evangelista C.C."/>
            <person name="Ferraz C."/>
            <person name="Ferriera S."/>
            <person name="Fleischmann W."/>
            <person name="Fosler C."/>
            <person name="Gabrielian A.E."/>
            <person name="Garg N.S."/>
            <person name="Gelbart W.M."/>
            <person name="Glasser K."/>
            <person name="Glodek A."/>
            <person name="Gong F."/>
            <person name="Gorrell J.H."/>
            <person name="Gu Z."/>
            <person name="Guan P."/>
            <person name="Harris M."/>
            <person name="Harris N.L."/>
            <person name="Harvey D.A."/>
            <person name="Heiman T.J."/>
            <person name="Hernandez J.R."/>
            <person name="Houck J."/>
            <person name="Hostin D."/>
            <person name="Houston K.A."/>
            <person name="Howland T.J."/>
            <person name="Wei M.-H."/>
            <person name="Ibegwam C."/>
            <person name="Jalali M."/>
            <person name="Kalush F."/>
            <person name="Karpen G.H."/>
            <person name="Ke Z."/>
            <person name="Kennison J.A."/>
            <person name="Ketchum K.A."/>
            <person name="Kimmel B.E."/>
            <person name="Kodira C.D."/>
            <person name="Kraft C.L."/>
            <person name="Kravitz S."/>
            <person name="Kulp D."/>
            <person name="Lai Z."/>
            <person name="Lasko P."/>
            <person name="Lei Y."/>
            <person name="Levitsky A.A."/>
            <person name="Li J.H."/>
            <person name="Li Z."/>
            <person name="Liang Y."/>
            <person name="Lin X."/>
            <person name="Liu X."/>
            <person name="Mattei B."/>
            <person name="McIntosh T.C."/>
            <person name="McLeod M.P."/>
            <person name="McPherson D."/>
            <person name="Merkulov G."/>
            <person name="Milshina N.V."/>
            <person name="Mobarry C."/>
            <person name="Morris J."/>
            <person name="Moshrefi A."/>
            <person name="Mount S.M."/>
            <person name="Moy M."/>
            <person name="Murphy B."/>
            <person name="Murphy L."/>
            <person name="Muzny D.M."/>
            <person name="Nelson D.L."/>
            <person name="Nelson D.R."/>
            <person name="Nelson K.A."/>
            <person name="Nixon K."/>
            <person name="Nusskern D.R."/>
            <person name="Pacleb J.M."/>
            <person name="Palazzolo M."/>
            <person name="Pittman G.S."/>
            <person name="Pan S."/>
            <person name="Pollard J."/>
            <person name="Puri V."/>
            <person name="Reese M.G."/>
            <person name="Reinert K."/>
            <person name="Remington K."/>
            <person name="Saunders R.D.C."/>
            <person name="Scheeler F."/>
            <person name="Shen H."/>
            <person name="Shue B.C."/>
            <person name="Siden-Kiamos I."/>
            <person name="Simpson M."/>
            <person name="Skupski M.P."/>
            <person name="Smith T.J."/>
            <person name="Spier E."/>
            <person name="Spradling A.C."/>
            <person name="Stapleton M."/>
            <person name="Strong R."/>
            <person name="Sun E."/>
            <person name="Svirskas R."/>
            <person name="Tector C."/>
            <person name="Turner R."/>
            <person name="Venter E."/>
            <person name="Wang A.H."/>
            <person name="Wang X."/>
            <person name="Wang Z.-Y."/>
            <person name="Wassarman D.A."/>
            <person name="Weinstock G.M."/>
            <person name="Weissenbach J."/>
            <person name="Williams S.M."/>
            <person name="Woodage T."/>
            <person name="Worley K.C."/>
            <person name="Wu D."/>
            <person name="Yang S."/>
            <person name="Yao Q.A."/>
            <person name="Ye J."/>
            <person name="Yeh R.-F."/>
            <person name="Zaveri J.S."/>
            <person name="Zhan M."/>
            <person name="Zhang G."/>
            <person name="Zhao Q."/>
            <person name="Zheng L."/>
            <person name="Zheng X.H."/>
            <person name="Zhong F.N."/>
            <person name="Zhong W."/>
            <person name="Zhou X."/>
            <person name="Zhu S.C."/>
            <person name="Zhu X."/>
            <person name="Smith H.O."/>
            <person name="Gibbs R.A."/>
            <person name="Myers E.W."/>
            <person name="Rubin G.M."/>
            <person name="Venter J.C."/>
        </authorList>
    </citation>
    <scope>NUCLEOTIDE SEQUENCE [LARGE SCALE GENOMIC DNA]</scope>
    <source>
        <strain>Berkeley</strain>
    </source>
</reference>
<reference key="3">
    <citation type="journal article" date="2002" name="Genome Biol.">
        <title>Annotation of the Drosophila melanogaster euchromatic genome: a systematic review.</title>
        <authorList>
            <person name="Misra S."/>
            <person name="Crosby M.A."/>
            <person name="Mungall C.J."/>
            <person name="Matthews B.B."/>
            <person name="Campbell K.S."/>
            <person name="Hradecky P."/>
            <person name="Huang Y."/>
            <person name="Kaminker J.S."/>
            <person name="Millburn G.H."/>
            <person name="Prochnik S.E."/>
            <person name="Smith C.D."/>
            <person name="Tupy J.L."/>
            <person name="Whitfield E.J."/>
            <person name="Bayraktaroglu L."/>
            <person name="Berman B.P."/>
            <person name="Bettencourt B.R."/>
            <person name="Celniker S.E."/>
            <person name="de Grey A.D.N.J."/>
            <person name="Drysdale R.A."/>
            <person name="Harris N.L."/>
            <person name="Richter J."/>
            <person name="Russo S."/>
            <person name="Schroeder A.J."/>
            <person name="Shu S.Q."/>
            <person name="Stapleton M."/>
            <person name="Yamada C."/>
            <person name="Ashburner M."/>
            <person name="Gelbart W.M."/>
            <person name="Rubin G.M."/>
            <person name="Lewis S.E."/>
        </authorList>
    </citation>
    <scope>GENOME REANNOTATION</scope>
    <source>
        <strain>Berkeley</strain>
    </source>
</reference>
<reference key="4">
    <citation type="submission" date="2009-07" db="EMBL/GenBank/DDBJ databases">
        <authorList>
            <person name="Stapleton M."/>
            <person name="Brokstein P."/>
            <person name="Hong L."/>
            <person name="Agbayani A."/>
            <person name="Carlson J.W."/>
            <person name="Booth B."/>
            <person name="Champe M."/>
            <person name="Chavez C."/>
            <person name="Dorsett V."/>
            <person name="Dresnek D."/>
            <person name="Farfan D."/>
            <person name="Frise E."/>
            <person name="George R.A."/>
            <person name="Gonzalez M."/>
            <person name="Guarin H."/>
            <person name="Kronmiller B."/>
            <person name="Li P.W."/>
            <person name="Liao G."/>
            <person name="Miranda A."/>
            <person name="Mungall C.J."/>
            <person name="Nunoo J."/>
            <person name="Pacleb J.M."/>
            <person name="Paragas V."/>
            <person name="Park S."/>
            <person name="Patel S."/>
            <person name="Phouanenavong S."/>
            <person name="Wan K.H."/>
            <person name="Yu C."/>
            <person name="Lewis S.E."/>
            <person name="Rubin G.M."/>
            <person name="Celniker S.E."/>
        </authorList>
    </citation>
    <scope>NUCLEOTIDE SEQUENCE [LARGE SCALE MRNA]</scope>
    <source>
        <strain>Berkeley</strain>
        <tissue>Larva</tissue>
        <tissue>Pupae</tissue>
    </source>
</reference>
<name>DYL2_DROME</name>
<proteinExistence type="evidence at protein level"/>
<gene>
    <name type="primary">Cdlc2</name>
    <name type="ORF">CG5450</name>
</gene>
<sequence length="89" mass="10358">MSDRKAVIKNADMSEEMQQDAVDCATQALEKYNIEKDIAAFIKKEFDKKYNPTWHCIVGRNFGSYVTHETRHFIYFYLGQVAILLFKSG</sequence>
<feature type="chain" id="PRO_0000195135" description="Dynein light chain 2, cytoplasmic">
    <location>
        <begin position="1"/>
        <end position="89"/>
    </location>
</feature>
<evidence type="ECO:0000250" key="1"/>
<evidence type="ECO:0000305" key="2"/>
<protein>
    <recommendedName>
        <fullName>Dynein light chain 2, cytoplasmic</fullName>
    </recommendedName>
    <alternativeName>
        <fullName>8 kDa dynein light chain</fullName>
    </alternativeName>
</protein>
<keyword id="KW-0963">Cytoplasm</keyword>
<keyword id="KW-0206">Cytoskeleton</keyword>
<keyword id="KW-0243">Dynein</keyword>
<keyword id="KW-0493">Microtubule</keyword>
<keyword id="KW-0505">Motor protein</keyword>
<keyword id="KW-1185">Reference proteome</keyword>
<dbReference type="EMBL" id="U48847">
    <property type="protein sequence ID" value="AAD00073.1"/>
    <property type="molecule type" value="mRNA"/>
</dbReference>
<dbReference type="EMBL" id="AE014134">
    <property type="protein sequence ID" value="AAF51383.1"/>
    <property type="molecule type" value="Genomic_DNA"/>
</dbReference>
<dbReference type="EMBL" id="AE014134">
    <property type="protein sequence ID" value="AAN10465.1"/>
    <property type="molecule type" value="Genomic_DNA"/>
</dbReference>
<dbReference type="EMBL" id="AY069718">
    <property type="protein sequence ID" value="AAL39863.1"/>
    <property type="molecule type" value="mRNA"/>
</dbReference>
<dbReference type="EMBL" id="BT088986">
    <property type="protein sequence ID" value="ACT88127.1"/>
    <property type="molecule type" value="mRNA"/>
</dbReference>
<dbReference type="RefSeq" id="NP_001245836.1">
    <property type="nucleotide sequence ID" value="NM_001258907.2"/>
</dbReference>
<dbReference type="RefSeq" id="NP_477408.1">
    <property type="nucleotide sequence ID" value="NM_058060.4"/>
</dbReference>
<dbReference type="RefSeq" id="NP_722698.1">
    <property type="nucleotide sequence ID" value="NM_164412.2"/>
</dbReference>
<dbReference type="BMRB" id="O96860"/>
<dbReference type="SMR" id="O96860"/>
<dbReference type="BioGRID" id="59568">
    <property type="interactions" value="46"/>
</dbReference>
<dbReference type="DIP" id="DIP-17518N"/>
<dbReference type="FunCoup" id="O96860">
    <property type="interactions" value="764"/>
</dbReference>
<dbReference type="IntAct" id="O96860">
    <property type="interactions" value="22"/>
</dbReference>
<dbReference type="STRING" id="7227.FBpp0077590"/>
<dbReference type="PaxDb" id="7227-FBpp0077590"/>
<dbReference type="DNASU" id="33319"/>
<dbReference type="EnsemblMetazoa" id="FBtr0077924">
    <property type="protein sequence ID" value="FBpp0077590"/>
    <property type="gene ID" value="FBgn0026141"/>
</dbReference>
<dbReference type="EnsemblMetazoa" id="FBtr0077925">
    <property type="protein sequence ID" value="FBpp0077591"/>
    <property type="gene ID" value="FBgn0026141"/>
</dbReference>
<dbReference type="EnsemblMetazoa" id="FBtr0305553">
    <property type="protein sequence ID" value="FBpp0294004"/>
    <property type="gene ID" value="FBgn0026141"/>
</dbReference>
<dbReference type="GeneID" id="33319"/>
<dbReference type="KEGG" id="dme:Dmel_CG5450"/>
<dbReference type="AGR" id="FB:FBgn0026141"/>
<dbReference type="CTD" id="33319"/>
<dbReference type="FlyBase" id="FBgn0026141">
    <property type="gene designation" value="Cdlc2"/>
</dbReference>
<dbReference type="VEuPathDB" id="VectorBase:FBgn0026141"/>
<dbReference type="eggNOG" id="KOG3430">
    <property type="taxonomic scope" value="Eukaryota"/>
</dbReference>
<dbReference type="GeneTree" id="ENSGT00390000000378"/>
<dbReference type="HOGENOM" id="CLU_070944_4_0_1"/>
<dbReference type="InParanoid" id="O96860"/>
<dbReference type="OMA" id="THEKGHF"/>
<dbReference type="OrthoDB" id="10033309at2759"/>
<dbReference type="PhylomeDB" id="O96860"/>
<dbReference type="Reactome" id="R-DME-1632852">
    <property type="pathway name" value="Macroautophagy"/>
</dbReference>
<dbReference type="Reactome" id="R-DME-3371497">
    <property type="pathway name" value="HSP90 chaperone cycle for steroid hormone receptors (SHR) in the presence of ligand"/>
</dbReference>
<dbReference type="Reactome" id="R-DME-6798695">
    <property type="pathway name" value="Neutrophil degranulation"/>
</dbReference>
<dbReference type="Reactome" id="R-DME-6807878">
    <property type="pathway name" value="COPI-mediated anterograde transport"/>
</dbReference>
<dbReference type="Reactome" id="R-DME-6811436">
    <property type="pathway name" value="COPI-independent Golgi-to-ER retrograde traffic"/>
</dbReference>
<dbReference type="Reactome" id="R-DME-9646399">
    <property type="pathway name" value="Aggrephagy"/>
</dbReference>
<dbReference type="BioGRID-ORCS" id="33319">
    <property type="hits" value="0 hits in 3 CRISPR screens"/>
</dbReference>
<dbReference type="GenomeRNAi" id="33319"/>
<dbReference type="PRO" id="PR:O96860"/>
<dbReference type="Proteomes" id="UP000000803">
    <property type="component" value="Chromosome 2L"/>
</dbReference>
<dbReference type="Bgee" id="FBgn0026141">
    <property type="expression patterns" value="Expressed in early elongation stage spermatid (Drosophila) in testis and 27 other cell types or tissues"/>
</dbReference>
<dbReference type="ExpressionAtlas" id="O96860">
    <property type="expression patterns" value="baseline and differential"/>
</dbReference>
<dbReference type="GO" id="GO:0005737">
    <property type="term" value="C:cytoplasm"/>
    <property type="evidence" value="ECO:0007669"/>
    <property type="project" value="UniProtKB-KW"/>
</dbReference>
<dbReference type="GO" id="GO:0005868">
    <property type="term" value="C:cytoplasmic dynein complex"/>
    <property type="evidence" value="ECO:0000318"/>
    <property type="project" value="GO_Central"/>
</dbReference>
<dbReference type="GO" id="GO:0005874">
    <property type="term" value="C:microtubule"/>
    <property type="evidence" value="ECO:0007669"/>
    <property type="project" value="UniProtKB-KW"/>
</dbReference>
<dbReference type="GO" id="GO:0045505">
    <property type="term" value="F:dynein intermediate chain binding"/>
    <property type="evidence" value="ECO:0000318"/>
    <property type="project" value="GO_Central"/>
</dbReference>
<dbReference type="GO" id="GO:0007017">
    <property type="term" value="P:microtubule-based process"/>
    <property type="evidence" value="ECO:0007669"/>
    <property type="project" value="InterPro"/>
</dbReference>
<dbReference type="CDD" id="cd21452">
    <property type="entry name" value="DLC-like_DYNLL1_DYNLL2"/>
    <property type="match status" value="1"/>
</dbReference>
<dbReference type="FunFam" id="3.30.740.10:FF:000001">
    <property type="entry name" value="Dynein light chain"/>
    <property type="match status" value="1"/>
</dbReference>
<dbReference type="Gene3D" id="3.30.740.10">
    <property type="entry name" value="Protein Inhibitor Of Neuronal Nitric Oxide Synthase"/>
    <property type="match status" value="1"/>
</dbReference>
<dbReference type="InterPro" id="IPR037177">
    <property type="entry name" value="DLC_sf"/>
</dbReference>
<dbReference type="InterPro" id="IPR019763">
    <property type="entry name" value="Dynein_light_1/2_CS"/>
</dbReference>
<dbReference type="InterPro" id="IPR001372">
    <property type="entry name" value="Dynein_light_chain_typ-1/2"/>
</dbReference>
<dbReference type="PANTHER" id="PTHR11886">
    <property type="entry name" value="DYNEIN LIGHT CHAIN"/>
    <property type="match status" value="1"/>
</dbReference>
<dbReference type="PANTHER" id="PTHR11886:SF35">
    <property type="entry name" value="DYNEIN LIGHT CHAIN"/>
    <property type="match status" value="1"/>
</dbReference>
<dbReference type="Pfam" id="PF01221">
    <property type="entry name" value="Dynein_light"/>
    <property type="match status" value="1"/>
</dbReference>
<dbReference type="SMART" id="SM01375">
    <property type="entry name" value="Dynein_light"/>
    <property type="match status" value="1"/>
</dbReference>
<dbReference type="SUPFAM" id="SSF54648">
    <property type="entry name" value="DLC"/>
    <property type="match status" value="1"/>
</dbReference>
<dbReference type="PROSITE" id="PS01239">
    <property type="entry name" value="DYNEIN_LIGHT_1"/>
    <property type="match status" value="1"/>
</dbReference>
<comment type="function">
    <text evidence="1">Acts as a non-catalytic accessory component of a dynein complex.</text>
</comment>
<comment type="interaction">
    <interactant intactId="EBI-146410">
        <id>O96860</id>
    </interactant>
    <interactant intactId="EBI-175261">
        <id>Q6NMT8</id>
        <label>Dmel\CG11125</label>
    </interactant>
    <organismsDiffer>false</organismsDiffer>
    <experiments>5</experiments>
</comment>
<comment type="interaction">
    <interactant intactId="EBI-146410">
        <id>O96860</id>
    </interactant>
    <interactant intactId="EBI-148486">
        <id>Q058Z8</id>
        <label>Dmel\CG30324</label>
    </interactant>
    <organismsDiffer>false</organismsDiffer>
    <experiments>4</experiments>
</comment>
<comment type="interaction">
    <interactant intactId="EBI-146410">
        <id>O96860</id>
    </interactant>
    <interactant intactId="EBI-88763">
        <id>Q7JX41</id>
        <label>geminin</label>
    </interactant>
    <organismsDiffer>false</organismsDiffer>
    <experiments>6</experiments>
</comment>
<comment type="subcellular location">
    <subcellularLocation>
        <location>Cytoplasm</location>
        <location>Cytoskeleton</location>
    </subcellularLocation>
</comment>
<comment type="similarity">
    <text evidence="2">Belongs to the dynein light chain family.</text>
</comment>
<organism>
    <name type="scientific">Drosophila melanogaster</name>
    <name type="common">Fruit fly</name>
    <dbReference type="NCBI Taxonomy" id="7227"/>
    <lineage>
        <taxon>Eukaryota</taxon>
        <taxon>Metazoa</taxon>
        <taxon>Ecdysozoa</taxon>
        <taxon>Arthropoda</taxon>
        <taxon>Hexapoda</taxon>
        <taxon>Insecta</taxon>
        <taxon>Pterygota</taxon>
        <taxon>Neoptera</taxon>
        <taxon>Endopterygota</taxon>
        <taxon>Diptera</taxon>
        <taxon>Brachycera</taxon>
        <taxon>Muscomorpha</taxon>
        <taxon>Ephydroidea</taxon>
        <taxon>Drosophilidae</taxon>
        <taxon>Drosophila</taxon>
        <taxon>Sophophora</taxon>
    </lineage>
</organism>